<organism>
    <name type="scientific">Enterobacteria phage phiK</name>
    <name type="common">Bacteriophage phi-K</name>
    <dbReference type="NCBI Taxonomy" id="10848"/>
    <lineage>
        <taxon>Viruses</taxon>
        <taxon>Monodnaviria</taxon>
        <taxon>Sangervirae</taxon>
        <taxon>Phixviricota</taxon>
        <taxon>Malgrandaviricetes</taxon>
        <taxon>Petitvirales</taxon>
        <taxon>Microviridae</taxon>
        <taxon>Bullavirinae</taxon>
        <taxon>Alphatrevirus</taxon>
    </lineage>
</organism>
<proteinExistence type="inferred from homology"/>
<feature type="initiator methionine" description="Removed; by host" evidence="1">
    <location>
        <position position="1"/>
    </location>
</feature>
<feature type="chain" id="PRO_0000164879" description="External scaffolding protein D" evidence="1">
    <location>
        <begin position="2"/>
        <end position="150"/>
    </location>
</feature>
<accession>Q38039</accession>
<sequence>MNIVSDVNYATSVAALRMLQASSVLDITEEDFDFLTGDKIWIATDRNRARRCVEACVYGTLDFVGYPRFPAPVEFIAAVIAYYVHPVNIQTACLVMEGAEFSENIINGVERPVNAAELFAYTLRIKAGFKETVIDAEENARQKLRANGLK</sequence>
<organismHost>
    <name type="scientific">Escherichia coli</name>
    <dbReference type="NCBI Taxonomy" id="562"/>
</organismHost>
<comment type="function">
    <text evidence="1">Assembles the procapsid by joining twelve 12S pre-assembly complex into a T=1 icosahedral particle, called 108S procapsid. Ten proteins D bind each 12S complex, which are formed by three pentamers of F, G, B protein and a H protein. The scaffolding protein is released from the provirion after genome packaging to form the mature virion.</text>
</comment>
<comment type="subunit">
    <text evidence="1">Component of the procapsid particle composed of 60 copies of the internally located B, 240 copies of the external scaffolding protein D, 60 copies of each of the viral structural proteins F and G, and 12 copies of protein H.</text>
</comment>
<comment type="subcellular location">
    <subcellularLocation>
        <location evidence="1">Host cytoplasm</location>
    </subcellularLocation>
</comment>
<comment type="miscellaneous">
    <text>Phi KhT, a host-range mutant of phi K, can grow on E.coli C and B, besides K12, and is more thermosensitive than the parental phage phi K.</text>
</comment>
<comment type="similarity">
    <text evidence="2">Belongs to the microvirus D protein family.</text>
</comment>
<reference key="1">
    <citation type="journal article" date="1996" name="J. Biochem.">
        <title>The virion proteins encoded by bacteriophage phi K and its host-range mutant phi KhT: host-range determination and DNA binding properties.</title>
        <authorList>
            <person name="Kodaira K."/>
            <person name="Oki M."/>
            <person name="Kakikawa M."/>
            <person name="Kimoto H."/>
            <person name="Taketo A."/>
        </authorList>
    </citation>
    <scope>NUCLEOTIDE SEQUENCE [GENOMIC DNA] (PHI-K AND MUTANT PHI KHT)</scope>
</reference>
<name>SCAFD_BPPHK</name>
<keyword id="KW-1035">Host cytoplasm</keyword>
<keyword id="KW-0118">Viral capsid assembly</keyword>
<keyword id="KW-1188">Viral release from host cell</keyword>
<evidence type="ECO:0000250" key="1">
    <source>
        <dbReference type="UniProtKB" id="P69486"/>
    </source>
</evidence>
<evidence type="ECO:0000305" key="2"/>
<protein>
    <recommendedName>
        <fullName>External scaffolding protein D</fullName>
    </recommendedName>
    <alternativeName>
        <fullName>Scaffolding protein D</fullName>
        <shortName>GPD</shortName>
    </alternativeName>
</protein>
<gene>
    <name type="primary">D</name>
</gene>
<dbReference type="EMBL" id="X60323">
    <property type="protein sequence ID" value="CAA42888.1"/>
    <property type="molecule type" value="Genomic_DNA"/>
</dbReference>
<dbReference type="RefSeq" id="NP_043946.1">
    <property type="nucleotide sequence ID" value="NC_001730.1"/>
</dbReference>
<dbReference type="SMR" id="Q38039"/>
<dbReference type="GeneID" id="1261196"/>
<dbReference type="KEGG" id="vg:1261196"/>
<dbReference type="Proteomes" id="UP000002122">
    <property type="component" value="Segment"/>
</dbReference>
<dbReference type="GO" id="GO:0030430">
    <property type="term" value="C:host cell cytoplasm"/>
    <property type="evidence" value="ECO:0007669"/>
    <property type="project" value="UniProtKB-SubCell"/>
</dbReference>
<dbReference type="GO" id="GO:0046797">
    <property type="term" value="P:viral procapsid maturation"/>
    <property type="evidence" value="ECO:0007669"/>
    <property type="project" value="InterPro"/>
</dbReference>
<dbReference type="Gene3D" id="1.10.1850.10">
    <property type="entry name" value="Scaffold protein D"/>
    <property type="match status" value="1"/>
</dbReference>
<dbReference type="InterPro" id="IPR004196">
    <property type="entry name" value="Scaffold_D"/>
</dbReference>
<dbReference type="InterPro" id="IPR036632">
    <property type="entry name" value="Scaffold_D_sf"/>
</dbReference>
<dbReference type="Pfam" id="PF02925">
    <property type="entry name" value="gpD"/>
    <property type="match status" value="1"/>
</dbReference>
<dbReference type="SUPFAM" id="SSF48045">
    <property type="entry name" value="Scaffolding protein gpD of bacteriophage procapsid"/>
    <property type="match status" value="1"/>
</dbReference>